<evidence type="ECO:0000250" key="1">
    <source>
        <dbReference type="UniProtKB" id="Q9Y274"/>
    </source>
</evidence>
<evidence type="ECO:0000255" key="2"/>
<evidence type="ECO:0000269" key="3">
    <source>
    </source>
</evidence>
<evidence type="ECO:0000305" key="4"/>
<feature type="chain" id="PRO_0000149306" description="Type 2 lactosamine alpha-2,3-sialyltransferase">
    <location>
        <begin position="1"/>
        <end position="329"/>
    </location>
</feature>
<feature type="topological domain" description="Cytoplasmic" evidence="2">
    <location>
        <begin position="1"/>
        <end position="4"/>
    </location>
</feature>
<feature type="transmembrane region" description="Helical; Signal-anchor for type II membrane protein" evidence="2">
    <location>
        <begin position="5"/>
        <end position="25"/>
    </location>
</feature>
<feature type="topological domain" description="Lumenal" evidence="2">
    <location>
        <begin position="26"/>
        <end position="329"/>
    </location>
</feature>
<feature type="glycosylation site" description="N-linked (GlcNAc...) asparagine" evidence="2">
    <location>
        <position position="129"/>
    </location>
</feature>
<feature type="glycosylation site" description="N-linked (GlcNAc...) asparagine" evidence="2">
    <location>
        <position position="181"/>
    </location>
</feature>
<feature type="glycosylation site" description="N-linked (GlcNAc...) asparagine" evidence="2">
    <location>
        <position position="295"/>
    </location>
</feature>
<feature type="glycosylation site" description="N-linked (GlcNAc...) asparagine" evidence="2">
    <location>
        <position position="308"/>
    </location>
</feature>
<feature type="sequence conflict" description="In Ref. 1; BAB79494." evidence="4" ref="1">
    <original>T</original>
    <variation>I</variation>
    <location>
        <position position="78"/>
    </location>
</feature>
<feature type="sequence conflict" description="In Ref. 4; AAH52338." evidence="4" ref="4">
    <original>D</original>
    <variation>N</variation>
    <location>
        <position position="137"/>
    </location>
</feature>
<feature type="sequence conflict" description="In Ref. 1; BAB79494." evidence="4" ref="1">
    <original>T</original>
    <variation>I</variation>
    <location>
        <position position="234"/>
    </location>
</feature>
<feature type="sequence conflict" description="In Ref. 1; BAB79494." evidence="4" ref="1">
    <original>T</original>
    <variation>TQN</variation>
    <location>
        <position position="329"/>
    </location>
</feature>
<gene>
    <name type="primary">St3gal6</name>
    <name type="synonym">Siat10</name>
</gene>
<proteinExistence type="evidence at transcript level"/>
<protein>
    <recommendedName>
        <fullName>Type 2 lactosamine alpha-2,3-sialyltransferase</fullName>
        <ecNumber evidence="1">2.4.3.6</ecNumber>
    </recommendedName>
    <alternativeName>
        <fullName>CMP-NeuAc:beta-galactoside alpha-2,3-sialyltransferase VI</fullName>
    </alternativeName>
    <alternativeName>
        <fullName>ST3Gal VI</fullName>
        <shortName>ST3GalVI</shortName>
    </alternativeName>
    <alternativeName>
        <fullName>Sialyltransferase 10</fullName>
    </alternativeName>
</protein>
<keyword id="KW-0325">Glycoprotein</keyword>
<keyword id="KW-0328">Glycosyltransferase</keyword>
<keyword id="KW-0333">Golgi apparatus</keyword>
<keyword id="KW-0472">Membrane</keyword>
<keyword id="KW-1185">Reference proteome</keyword>
<keyword id="KW-0735">Signal-anchor</keyword>
<keyword id="KW-0808">Transferase</keyword>
<keyword id="KW-0812">Transmembrane</keyword>
<keyword id="KW-1133">Transmembrane helix</keyword>
<dbReference type="EC" id="2.4.3.6" evidence="1"/>
<dbReference type="EMBL" id="AB063326">
    <property type="protein sequence ID" value="BAB79494.1"/>
    <property type="molecule type" value="mRNA"/>
</dbReference>
<dbReference type="EMBL" id="AF119390">
    <property type="protein sequence ID" value="AAD39130.1"/>
    <property type="molecule type" value="mRNA"/>
</dbReference>
<dbReference type="EMBL" id="AK033562">
    <property type="protein sequence ID" value="BAC28360.1"/>
    <property type="molecule type" value="mRNA"/>
</dbReference>
<dbReference type="EMBL" id="AK162619">
    <property type="protein sequence ID" value="BAE36994.1"/>
    <property type="molecule type" value="mRNA"/>
</dbReference>
<dbReference type="EMBL" id="BC052338">
    <property type="protein sequence ID" value="AAH52338.1"/>
    <property type="molecule type" value="mRNA"/>
</dbReference>
<dbReference type="CCDS" id="CCDS28230.1"/>
<dbReference type="RefSeq" id="NP_001344362.1">
    <property type="nucleotide sequence ID" value="NM_001357433.2"/>
</dbReference>
<dbReference type="RefSeq" id="NP_001344364.1">
    <property type="nucleotide sequence ID" value="NM_001357435.2"/>
</dbReference>
<dbReference type="RefSeq" id="NP_001390061.1">
    <property type="nucleotide sequence ID" value="NM_001403132.1"/>
</dbReference>
<dbReference type="RefSeq" id="NP_001390062.1">
    <property type="nucleotide sequence ID" value="NM_001403133.1"/>
</dbReference>
<dbReference type="RefSeq" id="NP_001390063.1">
    <property type="nucleotide sequence ID" value="NM_001403134.1"/>
</dbReference>
<dbReference type="RefSeq" id="NP_001390064.1">
    <property type="nucleotide sequence ID" value="NM_001403135.1"/>
</dbReference>
<dbReference type="RefSeq" id="NP_061254.1">
    <property type="nucleotide sequence ID" value="NM_018784.3"/>
</dbReference>
<dbReference type="RefSeq" id="XP_006522450.1">
    <property type="nucleotide sequence ID" value="XM_006522387.2"/>
</dbReference>
<dbReference type="RefSeq" id="XP_006522451.1">
    <property type="nucleotide sequence ID" value="XM_006522388.2"/>
</dbReference>
<dbReference type="RefSeq" id="XP_011244273.1">
    <property type="nucleotide sequence ID" value="XM_011245971.1"/>
</dbReference>
<dbReference type="RefSeq" id="XP_011244274.1">
    <property type="nucleotide sequence ID" value="XM_011245972.2"/>
</dbReference>
<dbReference type="RefSeq" id="XP_011244275.1">
    <property type="nucleotide sequence ID" value="XM_011245973.2"/>
</dbReference>
<dbReference type="RefSeq" id="XP_011244276.1">
    <property type="nucleotide sequence ID" value="XM_011245974.4"/>
</dbReference>
<dbReference type="RefSeq" id="XP_017172572.1">
    <property type="nucleotide sequence ID" value="XM_017317083.1"/>
</dbReference>
<dbReference type="RefSeq" id="XP_036015921.1">
    <property type="nucleotide sequence ID" value="XM_036160028.1"/>
</dbReference>
<dbReference type="RefSeq" id="XP_036015922.1">
    <property type="nucleotide sequence ID" value="XM_036160029.1"/>
</dbReference>
<dbReference type="RefSeq" id="XP_036015923.1">
    <property type="nucleotide sequence ID" value="XM_036160030.1"/>
</dbReference>
<dbReference type="RefSeq" id="XP_036015925.1">
    <property type="nucleotide sequence ID" value="XM_036160032.1"/>
</dbReference>
<dbReference type="SMR" id="Q8VIB3"/>
<dbReference type="FunCoup" id="Q8VIB3">
    <property type="interactions" value="95"/>
</dbReference>
<dbReference type="STRING" id="10090.ENSMUSP00000115756"/>
<dbReference type="CAZy" id="GT29">
    <property type="family name" value="Glycosyltransferase Family 29"/>
</dbReference>
<dbReference type="GlyCosmos" id="Q8VIB3">
    <property type="glycosylation" value="4 sites, No reported glycans"/>
</dbReference>
<dbReference type="GlyGen" id="Q8VIB3">
    <property type="glycosylation" value="4 sites, 1 N-linked glycan (1 site)"/>
</dbReference>
<dbReference type="PhosphoSitePlus" id="Q8VIB3"/>
<dbReference type="jPOST" id="Q8VIB3"/>
<dbReference type="PaxDb" id="10090-ENSMUSP00000115756"/>
<dbReference type="PeptideAtlas" id="Q8VIB3"/>
<dbReference type="ProteomicsDB" id="261229"/>
<dbReference type="Antibodypedia" id="35151">
    <property type="antibodies" value="59 antibodies from 22 providers"/>
</dbReference>
<dbReference type="DNASU" id="54613"/>
<dbReference type="Ensembl" id="ENSMUST00000114357.10">
    <property type="protein sequence ID" value="ENSMUSP00000109997.4"/>
    <property type="gene ID" value="ENSMUSG00000022747.18"/>
</dbReference>
<dbReference type="Ensembl" id="ENSMUST00000114358.9">
    <property type="protein sequence ID" value="ENSMUSP00000109998.3"/>
    <property type="gene ID" value="ENSMUSG00000022747.18"/>
</dbReference>
<dbReference type="Ensembl" id="ENSMUST00000137035.8">
    <property type="protein sequence ID" value="ENSMUSP00000115756.2"/>
    <property type="gene ID" value="ENSMUSG00000022747.18"/>
</dbReference>
<dbReference type="GeneID" id="54613"/>
<dbReference type="KEGG" id="mmu:54613"/>
<dbReference type="UCSC" id="uc007znt.2">
    <property type="organism name" value="mouse"/>
</dbReference>
<dbReference type="AGR" id="MGI:1888707"/>
<dbReference type="CTD" id="10402"/>
<dbReference type="MGI" id="MGI:1888707">
    <property type="gene designation" value="St3gal6"/>
</dbReference>
<dbReference type="VEuPathDB" id="HostDB:ENSMUSG00000022747"/>
<dbReference type="eggNOG" id="KOG2692">
    <property type="taxonomic scope" value="Eukaryota"/>
</dbReference>
<dbReference type="GeneTree" id="ENSGT00940000161415"/>
<dbReference type="HOGENOM" id="CLU_032020_1_1_1"/>
<dbReference type="InParanoid" id="Q8VIB3"/>
<dbReference type="OMA" id="LAFHICS"/>
<dbReference type="OrthoDB" id="10264956at2759"/>
<dbReference type="PhylomeDB" id="Q8VIB3"/>
<dbReference type="TreeFam" id="TF354325"/>
<dbReference type="Reactome" id="R-MMU-2022854">
    <property type="pathway name" value="Keratan sulfate biosynthesis"/>
</dbReference>
<dbReference type="Reactome" id="R-MMU-4085001">
    <property type="pathway name" value="Sialic acid metabolism"/>
</dbReference>
<dbReference type="Reactome" id="R-MMU-9037629">
    <property type="pathway name" value="Lewis blood group biosynthesis"/>
</dbReference>
<dbReference type="BioGRID-ORCS" id="54613">
    <property type="hits" value="4 hits in 80 CRISPR screens"/>
</dbReference>
<dbReference type="PRO" id="PR:Q8VIB3"/>
<dbReference type="Proteomes" id="UP000000589">
    <property type="component" value="Chromosome 16"/>
</dbReference>
<dbReference type="RNAct" id="Q8VIB3">
    <property type="molecule type" value="protein"/>
</dbReference>
<dbReference type="Bgee" id="ENSMUSG00000022747">
    <property type="expression patterns" value="Expressed in parotid gland and 245 other cell types or tissues"/>
</dbReference>
<dbReference type="ExpressionAtlas" id="Q8VIB3">
    <property type="expression patterns" value="baseline and differential"/>
</dbReference>
<dbReference type="GO" id="GO:0000139">
    <property type="term" value="C:Golgi membrane"/>
    <property type="evidence" value="ECO:0007669"/>
    <property type="project" value="UniProtKB-SubCell"/>
</dbReference>
<dbReference type="GO" id="GO:0008118">
    <property type="term" value="F:N-acetyllactosaminide alpha-2,3-sialyltransferase activity"/>
    <property type="evidence" value="ECO:0000250"/>
    <property type="project" value="UniProtKB"/>
</dbReference>
<dbReference type="GO" id="GO:0008373">
    <property type="term" value="F:sialyltransferase activity"/>
    <property type="evidence" value="ECO:0000266"/>
    <property type="project" value="MGI"/>
</dbReference>
<dbReference type="GO" id="GO:0071354">
    <property type="term" value="P:cellular response to interleukin-6"/>
    <property type="evidence" value="ECO:0000250"/>
    <property type="project" value="UniProtKB"/>
</dbReference>
<dbReference type="GO" id="GO:0009247">
    <property type="term" value="P:glycolipid biosynthetic process"/>
    <property type="evidence" value="ECO:0000250"/>
    <property type="project" value="UniProtKB"/>
</dbReference>
<dbReference type="GO" id="GO:0006486">
    <property type="term" value="P:protein glycosylation"/>
    <property type="evidence" value="ECO:0000250"/>
    <property type="project" value="UniProtKB"/>
</dbReference>
<dbReference type="FunFam" id="3.90.1480.20:FF:000007">
    <property type="entry name" value="Type 2 lactosamine alpha-2,3-sialyltransferase"/>
    <property type="match status" value="1"/>
</dbReference>
<dbReference type="Gene3D" id="3.90.1480.20">
    <property type="entry name" value="Glycosyl transferase family 29"/>
    <property type="match status" value="1"/>
</dbReference>
<dbReference type="InterPro" id="IPR001675">
    <property type="entry name" value="Glyco_trans_29"/>
</dbReference>
<dbReference type="InterPro" id="IPR051142">
    <property type="entry name" value="Glycosyltransferase_29"/>
</dbReference>
<dbReference type="InterPro" id="IPR038578">
    <property type="entry name" value="GT29-like_sf"/>
</dbReference>
<dbReference type="InterPro" id="IPR012163">
    <property type="entry name" value="Sialyl_trans"/>
</dbReference>
<dbReference type="PANTHER" id="PTHR13713">
    <property type="entry name" value="SIALYLTRANSFERASE"/>
    <property type="match status" value="1"/>
</dbReference>
<dbReference type="PANTHER" id="PTHR13713:SF8">
    <property type="entry name" value="TYPE 2 LACTOSAMINE ALPHA-2,3-SIALYLTRANSFERASE"/>
    <property type="match status" value="1"/>
</dbReference>
<dbReference type="Pfam" id="PF00777">
    <property type="entry name" value="Glyco_transf_29"/>
    <property type="match status" value="1"/>
</dbReference>
<dbReference type="PIRSF" id="PIRSF005557">
    <property type="entry name" value="Sialyl_trans"/>
    <property type="match status" value="1"/>
</dbReference>
<reference key="1">
    <citation type="submission" date="2001-06" db="EMBL/GenBank/DDBJ databases">
        <title>Differential expression of alpha2,3-sialyltransferases in the thalamus of mouse during epileptogenesis.</title>
        <authorList>
            <person name="Matsuhashi H."/>
            <person name="Kato K."/>
        </authorList>
    </citation>
    <scope>NUCLEOTIDE SEQUENCE [MRNA]</scope>
    <source>
        <strain>ddY</strain>
        <tissue>Hippocampus</tissue>
    </source>
</reference>
<reference key="2">
    <citation type="submission" date="1999-01" db="EMBL/GenBank/DDBJ databases">
        <title>Sialyltransferases.</title>
        <authorList>
            <person name="Kapitonov D."/>
            <person name="Yu R.K."/>
        </authorList>
    </citation>
    <scope>NUCLEOTIDE SEQUENCE [MRNA]</scope>
    <source>
        <tissue>Brain</tissue>
    </source>
</reference>
<reference key="3">
    <citation type="journal article" date="2005" name="Science">
        <title>The transcriptional landscape of the mammalian genome.</title>
        <authorList>
            <person name="Carninci P."/>
            <person name="Kasukawa T."/>
            <person name="Katayama S."/>
            <person name="Gough J."/>
            <person name="Frith M.C."/>
            <person name="Maeda N."/>
            <person name="Oyama R."/>
            <person name="Ravasi T."/>
            <person name="Lenhard B."/>
            <person name="Wells C."/>
            <person name="Kodzius R."/>
            <person name="Shimokawa K."/>
            <person name="Bajic V.B."/>
            <person name="Brenner S.E."/>
            <person name="Batalov S."/>
            <person name="Forrest A.R."/>
            <person name="Zavolan M."/>
            <person name="Davis M.J."/>
            <person name="Wilming L.G."/>
            <person name="Aidinis V."/>
            <person name="Allen J.E."/>
            <person name="Ambesi-Impiombato A."/>
            <person name="Apweiler R."/>
            <person name="Aturaliya R.N."/>
            <person name="Bailey T.L."/>
            <person name="Bansal M."/>
            <person name="Baxter L."/>
            <person name="Beisel K.W."/>
            <person name="Bersano T."/>
            <person name="Bono H."/>
            <person name="Chalk A.M."/>
            <person name="Chiu K.P."/>
            <person name="Choudhary V."/>
            <person name="Christoffels A."/>
            <person name="Clutterbuck D.R."/>
            <person name="Crowe M.L."/>
            <person name="Dalla E."/>
            <person name="Dalrymple B.P."/>
            <person name="de Bono B."/>
            <person name="Della Gatta G."/>
            <person name="di Bernardo D."/>
            <person name="Down T."/>
            <person name="Engstrom P."/>
            <person name="Fagiolini M."/>
            <person name="Faulkner G."/>
            <person name="Fletcher C.F."/>
            <person name="Fukushima T."/>
            <person name="Furuno M."/>
            <person name="Futaki S."/>
            <person name="Gariboldi M."/>
            <person name="Georgii-Hemming P."/>
            <person name="Gingeras T.R."/>
            <person name="Gojobori T."/>
            <person name="Green R.E."/>
            <person name="Gustincich S."/>
            <person name="Harbers M."/>
            <person name="Hayashi Y."/>
            <person name="Hensch T.K."/>
            <person name="Hirokawa N."/>
            <person name="Hill D."/>
            <person name="Huminiecki L."/>
            <person name="Iacono M."/>
            <person name="Ikeo K."/>
            <person name="Iwama A."/>
            <person name="Ishikawa T."/>
            <person name="Jakt M."/>
            <person name="Kanapin A."/>
            <person name="Katoh M."/>
            <person name="Kawasawa Y."/>
            <person name="Kelso J."/>
            <person name="Kitamura H."/>
            <person name="Kitano H."/>
            <person name="Kollias G."/>
            <person name="Krishnan S.P."/>
            <person name="Kruger A."/>
            <person name="Kummerfeld S.K."/>
            <person name="Kurochkin I.V."/>
            <person name="Lareau L.F."/>
            <person name="Lazarevic D."/>
            <person name="Lipovich L."/>
            <person name="Liu J."/>
            <person name="Liuni S."/>
            <person name="McWilliam S."/>
            <person name="Madan Babu M."/>
            <person name="Madera M."/>
            <person name="Marchionni L."/>
            <person name="Matsuda H."/>
            <person name="Matsuzawa S."/>
            <person name="Miki H."/>
            <person name="Mignone F."/>
            <person name="Miyake S."/>
            <person name="Morris K."/>
            <person name="Mottagui-Tabar S."/>
            <person name="Mulder N."/>
            <person name="Nakano N."/>
            <person name="Nakauchi H."/>
            <person name="Ng P."/>
            <person name="Nilsson R."/>
            <person name="Nishiguchi S."/>
            <person name="Nishikawa S."/>
            <person name="Nori F."/>
            <person name="Ohara O."/>
            <person name="Okazaki Y."/>
            <person name="Orlando V."/>
            <person name="Pang K.C."/>
            <person name="Pavan W.J."/>
            <person name="Pavesi G."/>
            <person name="Pesole G."/>
            <person name="Petrovsky N."/>
            <person name="Piazza S."/>
            <person name="Reed J."/>
            <person name="Reid J.F."/>
            <person name="Ring B.Z."/>
            <person name="Ringwald M."/>
            <person name="Rost B."/>
            <person name="Ruan Y."/>
            <person name="Salzberg S.L."/>
            <person name="Sandelin A."/>
            <person name="Schneider C."/>
            <person name="Schoenbach C."/>
            <person name="Sekiguchi K."/>
            <person name="Semple C.A."/>
            <person name="Seno S."/>
            <person name="Sessa L."/>
            <person name="Sheng Y."/>
            <person name="Shibata Y."/>
            <person name="Shimada H."/>
            <person name="Shimada K."/>
            <person name="Silva D."/>
            <person name="Sinclair B."/>
            <person name="Sperling S."/>
            <person name="Stupka E."/>
            <person name="Sugiura K."/>
            <person name="Sultana R."/>
            <person name="Takenaka Y."/>
            <person name="Taki K."/>
            <person name="Tammoja K."/>
            <person name="Tan S.L."/>
            <person name="Tang S."/>
            <person name="Taylor M.S."/>
            <person name="Tegner J."/>
            <person name="Teichmann S.A."/>
            <person name="Ueda H.R."/>
            <person name="van Nimwegen E."/>
            <person name="Verardo R."/>
            <person name="Wei C.L."/>
            <person name="Yagi K."/>
            <person name="Yamanishi H."/>
            <person name="Zabarovsky E."/>
            <person name="Zhu S."/>
            <person name="Zimmer A."/>
            <person name="Hide W."/>
            <person name="Bult C."/>
            <person name="Grimmond S.M."/>
            <person name="Teasdale R.D."/>
            <person name="Liu E.T."/>
            <person name="Brusic V."/>
            <person name="Quackenbush J."/>
            <person name="Wahlestedt C."/>
            <person name="Mattick J.S."/>
            <person name="Hume D.A."/>
            <person name="Kai C."/>
            <person name="Sasaki D."/>
            <person name="Tomaru Y."/>
            <person name="Fukuda S."/>
            <person name="Kanamori-Katayama M."/>
            <person name="Suzuki M."/>
            <person name="Aoki J."/>
            <person name="Arakawa T."/>
            <person name="Iida J."/>
            <person name="Imamura K."/>
            <person name="Itoh M."/>
            <person name="Kato T."/>
            <person name="Kawaji H."/>
            <person name="Kawagashira N."/>
            <person name="Kawashima T."/>
            <person name="Kojima M."/>
            <person name="Kondo S."/>
            <person name="Konno H."/>
            <person name="Nakano K."/>
            <person name="Ninomiya N."/>
            <person name="Nishio T."/>
            <person name="Okada M."/>
            <person name="Plessy C."/>
            <person name="Shibata K."/>
            <person name="Shiraki T."/>
            <person name="Suzuki S."/>
            <person name="Tagami M."/>
            <person name="Waki K."/>
            <person name="Watahiki A."/>
            <person name="Okamura-Oho Y."/>
            <person name="Suzuki H."/>
            <person name="Kawai J."/>
            <person name="Hayashizaki Y."/>
        </authorList>
    </citation>
    <scope>NUCLEOTIDE SEQUENCE [LARGE SCALE MRNA]</scope>
    <source>
        <strain>C57BL/6J</strain>
        <tissue>Bone</tissue>
        <tissue>Colon</tissue>
    </source>
</reference>
<reference key="4">
    <citation type="journal article" date="2004" name="Genome Res.">
        <title>The status, quality, and expansion of the NIH full-length cDNA project: the Mammalian Gene Collection (MGC).</title>
        <authorList>
            <consortium name="The MGC Project Team"/>
        </authorList>
    </citation>
    <scope>NUCLEOTIDE SEQUENCE [LARGE SCALE MRNA]</scope>
    <source>
        <strain>C3H/He</strain>
        <tissue>Mesenchymal stem cell</tissue>
    </source>
</reference>
<reference key="5">
    <citation type="journal article" date="2012" name="Blood">
        <title>Coordinated roles of ST3Gal-VI and ST3Gal-IV sialyltransferases in the synthesis of selectin ligands.</title>
        <authorList>
            <person name="Yang W.H."/>
            <person name="Nussbaum C."/>
            <person name="Grewal P.K."/>
            <person name="Marth J.D."/>
            <person name="Sperandio M."/>
        </authorList>
    </citation>
    <scope>FUNCTION</scope>
</reference>
<accession>Q8VIB3</accession>
<accession>Q3TRN3</accession>
<accession>Q80UR7</accession>
<accession>Q9WVG2</accession>
<name>SIA10_MOUSE</name>
<sequence>MKGYLVAIFLSSIFLYYVLYCILWGTNGYWFPAEEMRTRNNVNNCFKKPAFANLLRFPQLYPFLCRADFIKVAAMSGTNNFPLPYGIKTFETYFSSALSKLQSCDLFDEFDRVPCKRCVVVGNGGVLKNKTLGATIDSYDVIIRMNNGPVLGHEEEVGTRTTFRLFYPESVFSDSSHYDPNTTAVLVVFKPQDLRWLVEILLGKKINTQGFWKTPALKLIYKQYQIRILDPYITSEAAFQMLRFPRVFPKDQKPKHPTTGIIAITMAFHICSEVHLAGFKYNFYSPNSPLHYYGNATMSLMKQNAYHNLTAEQLFLNDIIKKKMVINLT</sequence>
<organism>
    <name type="scientific">Mus musculus</name>
    <name type="common">Mouse</name>
    <dbReference type="NCBI Taxonomy" id="10090"/>
    <lineage>
        <taxon>Eukaryota</taxon>
        <taxon>Metazoa</taxon>
        <taxon>Chordata</taxon>
        <taxon>Craniata</taxon>
        <taxon>Vertebrata</taxon>
        <taxon>Euteleostomi</taxon>
        <taxon>Mammalia</taxon>
        <taxon>Eutheria</taxon>
        <taxon>Euarchontoglires</taxon>
        <taxon>Glires</taxon>
        <taxon>Rodentia</taxon>
        <taxon>Myomorpha</taxon>
        <taxon>Muroidea</taxon>
        <taxon>Muridae</taxon>
        <taxon>Murinae</taxon>
        <taxon>Mus</taxon>
        <taxon>Mus</taxon>
    </lineage>
</organism>
<comment type="function">
    <text evidence="1 3">Transfers the sialyl residue from CMP-N-acetyl-beta-neuraminate to the terminal galactose residue on sugar chains of glycoproteins and glycolipids. It's alpha-2,3-sialyltransferase activity is specific toward type II glycan chains (Galbeta1-4GlcNAc) on glycoproteins and glycolipids such as neolactosides nLc4Cer and nLc6Cer, whose sialyl-products serve as precursors for the Lewis X antigen (By similarity). Critically involved in the synthesis of functional selectin ligands needed for neutrophil recruitment during inflammation and lymphocyte homing to the lymph nodes (PubMed:22700726).</text>
</comment>
<comment type="catalytic activity">
    <reaction evidence="1">
        <text>a neolactoside nLc4Cer(d18:1(4E)) + CMP-N-acetyl-beta-neuraminate = a neolactoside IV(3)-alpha-NeuAc-nLc4Cer(d18:1(4E)) + CMP + H(+)</text>
        <dbReference type="Rhea" id="RHEA:18913"/>
        <dbReference type="ChEBI" id="CHEBI:15378"/>
        <dbReference type="ChEBI" id="CHEBI:17006"/>
        <dbReference type="ChEBI" id="CHEBI:57812"/>
        <dbReference type="ChEBI" id="CHEBI:58665"/>
        <dbReference type="ChEBI" id="CHEBI:60377"/>
        <dbReference type="EC" id="2.4.3.6"/>
    </reaction>
    <physiologicalReaction direction="left-to-right" evidence="1">
        <dbReference type="Rhea" id="RHEA:18914"/>
    </physiologicalReaction>
</comment>
<comment type="catalytic activity">
    <reaction evidence="1">
        <text>a beta-D-galactosyl-(1-&gt;4)-N-acetyl-beta-D-glucosaminyl derivative + CMP-N-acetyl-beta-neuraminate = an N-acetyl-alpha-neuraminyl-(2-&gt;3)-beta-D-galactosyl-(1-&gt;4)-N-acetyl-beta-D-glucosaminyl derivative + CMP + H(+)</text>
        <dbReference type="Rhea" id="RHEA:52316"/>
        <dbReference type="ChEBI" id="CHEBI:15378"/>
        <dbReference type="ChEBI" id="CHEBI:57812"/>
        <dbReference type="ChEBI" id="CHEBI:60377"/>
        <dbReference type="ChEBI" id="CHEBI:133507"/>
        <dbReference type="ChEBI" id="CHEBI:136545"/>
        <dbReference type="EC" id="2.4.3.6"/>
    </reaction>
    <physiologicalReaction direction="left-to-right" evidence="1">
        <dbReference type="Rhea" id="RHEA:52317"/>
    </physiologicalReaction>
</comment>
<comment type="catalytic activity">
    <reaction evidence="1">
        <text>a neolactoside nLc6Cer(d18:1(4E)) + CMP-N-acetyl-beta-neuraminate = a neolactoside VI(3)-alpha-NeuNAc-nLc6Cer(d18:1(4E)) + CMP + H(+)</text>
        <dbReference type="Rhea" id="RHEA:80751"/>
        <dbReference type="ChEBI" id="CHEBI:15378"/>
        <dbReference type="ChEBI" id="CHEBI:57812"/>
        <dbReference type="ChEBI" id="CHEBI:60377"/>
        <dbReference type="ChEBI" id="CHEBI:61610"/>
        <dbReference type="ChEBI" id="CHEBI:144452"/>
    </reaction>
    <physiologicalReaction direction="left-to-right" evidence="1">
        <dbReference type="Rhea" id="RHEA:80752"/>
    </physiologicalReaction>
</comment>
<comment type="subcellular location">
    <subcellularLocation>
        <location evidence="4">Golgi apparatus membrane</location>
        <topology evidence="4">Single-pass type II membrane protein</topology>
    </subcellularLocation>
</comment>
<comment type="similarity">
    <text evidence="4">Belongs to the glycosyltransferase 29 family.</text>
</comment>
<comment type="online information" name="Functional Glycomics Gateway - GTase">
    <link uri="http://www.functionalglycomics.org/glycomics/molecule/jsp/glycoEnzyme/viewGlycoEnzyme.jsp?gbpId=gt_mou_647"/>
    <text>ST3Gal VI</text>
</comment>